<organism>
    <name type="scientific">Arabidopsis thaliana</name>
    <name type="common">Mouse-ear cress</name>
    <dbReference type="NCBI Taxonomy" id="3702"/>
    <lineage>
        <taxon>Eukaryota</taxon>
        <taxon>Viridiplantae</taxon>
        <taxon>Streptophyta</taxon>
        <taxon>Embryophyta</taxon>
        <taxon>Tracheophyta</taxon>
        <taxon>Spermatophyta</taxon>
        <taxon>Magnoliopsida</taxon>
        <taxon>eudicotyledons</taxon>
        <taxon>Gunneridae</taxon>
        <taxon>Pentapetalae</taxon>
        <taxon>rosids</taxon>
        <taxon>malvids</taxon>
        <taxon>Brassicales</taxon>
        <taxon>Brassicaceae</taxon>
        <taxon>Camelineae</taxon>
        <taxon>Arabidopsis</taxon>
    </lineage>
</organism>
<keyword id="KW-0025">Alternative splicing</keyword>
<keyword id="KW-0150">Chloroplast</keyword>
<keyword id="KW-0472">Membrane</keyword>
<keyword id="KW-0934">Plastid</keyword>
<keyword id="KW-1185">Reference proteome</keyword>
<keyword id="KW-0793">Thylakoid</keyword>
<keyword id="KW-0809">Transit peptide</keyword>
<keyword id="KW-0812">Transmembrane</keyword>
<keyword id="KW-1133">Transmembrane helix</keyword>
<sequence length="156" mass="16946">MASISATLPSPLLLTQRKSNLTSIQKLPFSLTRGTNDLSPLSLTRNPSSISLMVKASGESSDSSTDLDVVSTIQNVWDKSEDRLGLIGLGFAGIVALWASLNLITAIDKLPVISSGFELVGILFSTWFTYRYLLFKPDRQELSKIVKKSVADILGQ</sequence>
<name>CUT1C_ARATH</name>
<protein>
    <recommendedName>
        <fullName>Protein CURVATURE THYLAKOID 1C, chloroplastic</fullName>
    </recommendedName>
</protein>
<accession>Q9M812</accession>
<accession>A8MRU7</accession>
<accession>F4ICU6</accession>
<accession>Q8LDB5</accession>
<evidence type="ECO:0000255" key="1"/>
<evidence type="ECO:0000269" key="2">
    <source>
    </source>
</evidence>
<evidence type="ECO:0000269" key="3">
    <source>
    </source>
</evidence>
<evidence type="ECO:0000305" key="4"/>
<proteinExistence type="evidence at protein level"/>
<reference key="1">
    <citation type="journal article" date="2000" name="Nature">
        <title>Sequence and analysis of chromosome 1 of the plant Arabidopsis thaliana.</title>
        <authorList>
            <person name="Theologis A."/>
            <person name="Ecker J.R."/>
            <person name="Palm C.J."/>
            <person name="Federspiel N.A."/>
            <person name="Kaul S."/>
            <person name="White O."/>
            <person name="Alonso J."/>
            <person name="Altafi H."/>
            <person name="Araujo R."/>
            <person name="Bowman C.L."/>
            <person name="Brooks S.Y."/>
            <person name="Buehler E."/>
            <person name="Chan A."/>
            <person name="Chao Q."/>
            <person name="Chen H."/>
            <person name="Cheuk R.F."/>
            <person name="Chin C.W."/>
            <person name="Chung M.K."/>
            <person name="Conn L."/>
            <person name="Conway A.B."/>
            <person name="Conway A.R."/>
            <person name="Creasy T.H."/>
            <person name="Dewar K."/>
            <person name="Dunn P."/>
            <person name="Etgu P."/>
            <person name="Feldblyum T.V."/>
            <person name="Feng J.-D."/>
            <person name="Fong B."/>
            <person name="Fujii C.Y."/>
            <person name="Gill J.E."/>
            <person name="Goldsmith A.D."/>
            <person name="Haas B."/>
            <person name="Hansen N.F."/>
            <person name="Hughes B."/>
            <person name="Huizar L."/>
            <person name="Hunter J.L."/>
            <person name="Jenkins J."/>
            <person name="Johnson-Hopson C."/>
            <person name="Khan S."/>
            <person name="Khaykin E."/>
            <person name="Kim C.J."/>
            <person name="Koo H.L."/>
            <person name="Kremenetskaia I."/>
            <person name="Kurtz D.B."/>
            <person name="Kwan A."/>
            <person name="Lam B."/>
            <person name="Langin-Hooper S."/>
            <person name="Lee A."/>
            <person name="Lee J.M."/>
            <person name="Lenz C.A."/>
            <person name="Li J.H."/>
            <person name="Li Y.-P."/>
            <person name="Lin X."/>
            <person name="Liu S.X."/>
            <person name="Liu Z.A."/>
            <person name="Luros J.S."/>
            <person name="Maiti R."/>
            <person name="Marziali A."/>
            <person name="Militscher J."/>
            <person name="Miranda M."/>
            <person name="Nguyen M."/>
            <person name="Nierman W.C."/>
            <person name="Osborne B.I."/>
            <person name="Pai G."/>
            <person name="Peterson J."/>
            <person name="Pham P.K."/>
            <person name="Rizzo M."/>
            <person name="Rooney T."/>
            <person name="Rowley D."/>
            <person name="Sakano H."/>
            <person name="Salzberg S.L."/>
            <person name="Schwartz J.R."/>
            <person name="Shinn P."/>
            <person name="Southwick A.M."/>
            <person name="Sun H."/>
            <person name="Tallon L.J."/>
            <person name="Tambunga G."/>
            <person name="Toriumi M.J."/>
            <person name="Town C.D."/>
            <person name="Utterback T."/>
            <person name="Van Aken S."/>
            <person name="Vaysberg M."/>
            <person name="Vysotskaia V.S."/>
            <person name="Walker M."/>
            <person name="Wu D."/>
            <person name="Yu G."/>
            <person name="Fraser C.M."/>
            <person name="Venter J.C."/>
            <person name="Davis R.W."/>
        </authorList>
    </citation>
    <scope>NUCLEOTIDE SEQUENCE [LARGE SCALE GENOMIC DNA]</scope>
    <source>
        <strain>cv. Columbia</strain>
    </source>
</reference>
<reference key="2">
    <citation type="journal article" date="2017" name="Plant J.">
        <title>Araport11: a complete reannotation of the Arabidopsis thaliana reference genome.</title>
        <authorList>
            <person name="Cheng C.Y."/>
            <person name="Krishnakumar V."/>
            <person name="Chan A.P."/>
            <person name="Thibaud-Nissen F."/>
            <person name="Schobel S."/>
            <person name="Town C.D."/>
        </authorList>
    </citation>
    <scope>GENOME REANNOTATION</scope>
    <source>
        <strain>cv. Columbia</strain>
    </source>
</reference>
<reference key="3">
    <citation type="journal article" date="2003" name="Science">
        <title>Empirical analysis of transcriptional activity in the Arabidopsis genome.</title>
        <authorList>
            <person name="Yamada K."/>
            <person name="Lim J."/>
            <person name="Dale J.M."/>
            <person name="Chen H."/>
            <person name="Shinn P."/>
            <person name="Palm C.J."/>
            <person name="Southwick A.M."/>
            <person name="Wu H.C."/>
            <person name="Kim C.J."/>
            <person name="Nguyen M."/>
            <person name="Pham P.K."/>
            <person name="Cheuk R.F."/>
            <person name="Karlin-Newmann G."/>
            <person name="Liu S.X."/>
            <person name="Lam B."/>
            <person name="Sakano H."/>
            <person name="Wu T."/>
            <person name="Yu G."/>
            <person name="Miranda M."/>
            <person name="Quach H.L."/>
            <person name="Tripp M."/>
            <person name="Chang C.H."/>
            <person name="Lee J.M."/>
            <person name="Toriumi M.J."/>
            <person name="Chan M.M."/>
            <person name="Tang C.C."/>
            <person name="Onodera C.S."/>
            <person name="Deng J.M."/>
            <person name="Akiyama K."/>
            <person name="Ansari Y."/>
            <person name="Arakawa T."/>
            <person name="Banh J."/>
            <person name="Banno F."/>
            <person name="Bowser L."/>
            <person name="Brooks S.Y."/>
            <person name="Carninci P."/>
            <person name="Chao Q."/>
            <person name="Choy N."/>
            <person name="Enju A."/>
            <person name="Goldsmith A.D."/>
            <person name="Gurjal M."/>
            <person name="Hansen N.F."/>
            <person name="Hayashizaki Y."/>
            <person name="Johnson-Hopson C."/>
            <person name="Hsuan V.W."/>
            <person name="Iida K."/>
            <person name="Karnes M."/>
            <person name="Khan S."/>
            <person name="Koesema E."/>
            <person name="Ishida J."/>
            <person name="Jiang P.X."/>
            <person name="Jones T."/>
            <person name="Kawai J."/>
            <person name="Kamiya A."/>
            <person name="Meyers C."/>
            <person name="Nakajima M."/>
            <person name="Narusaka M."/>
            <person name="Seki M."/>
            <person name="Sakurai T."/>
            <person name="Satou M."/>
            <person name="Tamse R."/>
            <person name="Vaysberg M."/>
            <person name="Wallender E.K."/>
            <person name="Wong C."/>
            <person name="Yamamura Y."/>
            <person name="Yuan S."/>
            <person name="Shinozaki K."/>
            <person name="Davis R.W."/>
            <person name="Theologis A."/>
            <person name="Ecker J.R."/>
        </authorList>
    </citation>
    <scope>NUCLEOTIDE SEQUENCE [LARGE SCALE MRNA] (ISOFORM 1)</scope>
    <source>
        <strain>cv. Columbia</strain>
    </source>
</reference>
<reference key="4">
    <citation type="submission" date="2002-03" db="EMBL/GenBank/DDBJ databases">
        <title>Full-length cDNA from Arabidopsis thaliana.</title>
        <authorList>
            <person name="Brover V.V."/>
            <person name="Troukhan M.E."/>
            <person name="Alexandrov N.A."/>
            <person name="Lu Y.-P."/>
            <person name="Flavell R.B."/>
            <person name="Feldmann K.A."/>
        </authorList>
    </citation>
    <scope>NUCLEOTIDE SEQUENCE [LARGE SCALE MRNA] (ISOFORM 1)</scope>
</reference>
<reference key="5">
    <citation type="journal article" date="2008" name="Cell Res.">
        <title>Construction of a chloroplast protein interaction network and functional mining of photosynthetic proteins in Arabidopsis thaliana.</title>
        <authorList>
            <person name="Yu Q.B."/>
            <person name="Li G."/>
            <person name="Wang G."/>
            <person name="Sun J.C."/>
            <person name="Wang P.C."/>
            <person name="Wang C."/>
            <person name="Mi H.L."/>
            <person name="Ma W.M."/>
            <person name="Cui J."/>
            <person name="Cui Y.L."/>
            <person name="Chong K."/>
            <person name="Li Y.X."/>
            <person name="Li Y.H."/>
            <person name="Zhao Z."/>
            <person name="Shi T.L."/>
            <person name="Yang Z.N."/>
        </authorList>
    </citation>
    <scope>INTERACTION WITH PSAD2</scope>
    <scope>SUBCELLULAR LOCATION</scope>
</reference>
<reference key="6">
    <citation type="journal article" date="2013" name="Plant Cell">
        <title>Arabidopsis CURVATURE THYLAKOID1 proteins modify thylakoid architecture by inducing membrane curvature.</title>
        <authorList>
            <person name="Armbruster U."/>
            <person name="Labs M."/>
            <person name="Pribil M."/>
            <person name="Viola S."/>
            <person name="Xu W."/>
            <person name="Scharfenberg M."/>
            <person name="Hertle A.P."/>
            <person name="Rojahn U."/>
            <person name="Jensen P.E."/>
            <person name="Rappaport F."/>
            <person name="Joliot P."/>
            <person name="Doermann P."/>
            <person name="Wanner G."/>
            <person name="Leister D."/>
        </authorList>
    </citation>
    <scope>FUNCTION</scope>
    <scope>TOPOLOGY</scope>
    <scope>SUBCELLULAR LOCATION</scope>
    <scope>SUBUNIT</scope>
    <scope>NOMENCLATURE</scope>
    <scope>DISRUPTION PHENOTYPE</scope>
</reference>
<feature type="transit peptide" description="Chloroplast" evidence="1">
    <location>
        <begin position="1"/>
        <end position="55"/>
    </location>
</feature>
<feature type="chain" id="PRO_0000424360" description="Protein CURVATURE THYLAKOID 1C, chloroplastic">
    <location>
        <begin position="56"/>
        <end position="156"/>
    </location>
</feature>
<feature type="topological domain" description="Stromal" evidence="3">
    <location>
        <begin position="56"/>
        <end position="83"/>
    </location>
</feature>
<feature type="transmembrane region" description="Helical" evidence="1">
    <location>
        <begin position="84"/>
        <end position="104"/>
    </location>
</feature>
<feature type="topological domain" description="Lumenal" evidence="3">
    <location>
        <begin position="105"/>
        <end position="109"/>
    </location>
</feature>
<feature type="transmembrane region" description="Helical" evidence="1">
    <location>
        <begin position="110"/>
        <end position="130"/>
    </location>
</feature>
<feature type="topological domain" description="Stromal" evidence="3">
    <location>
        <begin position="131"/>
        <end position="156"/>
    </location>
</feature>
<feature type="splice variant" id="VSP_053422" description="In isoform 2." evidence="4">
    <location>
        <position position="76"/>
    </location>
</feature>
<feature type="splice variant" id="VSP_053423" description="In isoform 3." evidence="4">
    <location>
        <begin position="77"/>
        <end position="105"/>
    </location>
</feature>
<dbReference type="EMBL" id="AC022354">
    <property type="protein sequence ID" value="AAF29409.1"/>
    <property type="molecule type" value="Genomic_DNA"/>
</dbReference>
<dbReference type="EMBL" id="CP002684">
    <property type="protein sequence ID" value="AEE32769.1"/>
    <property type="molecule type" value="Genomic_DNA"/>
</dbReference>
<dbReference type="EMBL" id="CP002684">
    <property type="protein sequence ID" value="AEE32770.1"/>
    <property type="molecule type" value="Genomic_DNA"/>
</dbReference>
<dbReference type="EMBL" id="CP002684">
    <property type="protein sequence ID" value="AEE32771.1"/>
    <property type="molecule type" value="Genomic_DNA"/>
</dbReference>
<dbReference type="EMBL" id="AF410269">
    <property type="protein sequence ID" value="AAK95255.1"/>
    <property type="molecule type" value="mRNA"/>
</dbReference>
<dbReference type="EMBL" id="AY097365">
    <property type="protein sequence ID" value="AAM19881.1"/>
    <property type="molecule type" value="mRNA"/>
</dbReference>
<dbReference type="EMBL" id="AY086098">
    <property type="protein sequence ID" value="AAM63306.1"/>
    <property type="molecule type" value="mRNA"/>
</dbReference>
<dbReference type="PIR" id="B96562">
    <property type="entry name" value="B96562"/>
</dbReference>
<dbReference type="RefSeq" id="NP_001031173.1">
    <molecule id="Q9M812-2"/>
    <property type="nucleotide sequence ID" value="NM_001036096.1"/>
</dbReference>
<dbReference type="RefSeq" id="NP_001077703.1">
    <molecule id="Q9M812-3"/>
    <property type="nucleotide sequence ID" value="NM_001084234.1"/>
</dbReference>
<dbReference type="RefSeq" id="NP_564603.1">
    <molecule id="Q9M812-1"/>
    <property type="nucleotide sequence ID" value="NM_104101.2"/>
</dbReference>
<dbReference type="BioGRID" id="26877">
    <property type="interactions" value="2"/>
</dbReference>
<dbReference type="FunCoup" id="Q9M812">
    <property type="interactions" value="1223"/>
</dbReference>
<dbReference type="IntAct" id="Q9M812">
    <property type="interactions" value="5"/>
</dbReference>
<dbReference type="STRING" id="3702.Q9M812"/>
<dbReference type="TCDB" id="8.A.155.1.3">
    <property type="family name" value="the curt protein (curtp) family"/>
</dbReference>
<dbReference type="iPTMnet" id="Q9M812"/>
<dbReference type="PaxDb" id="3702-AT1G52220.1"/>
<dbReference type="ProteomicsDB" id="220373">
    <molecule id="Q9M812-1"/>
</dbReference>
<dbReference type="EnsemblPlants" id="AT1G52220.1">
    <molecule id="Q9M812-1"/>
    <property type="protein sequence ID" value="AT1G52220.1"/>
    <property type="gene ID" value="AT1G52220"/>
</dbReference>
<dbReference type="EnsemblPlants" id="AT1G52220.2">
    <molecule id="Q9M812-2"/>
    <property type="protein sequence ID" value="AT1G52220.2"/>
    <property type="gene ID" value="AT1G52220"/>
</dbReference>
<dbReference type="EnsemblPlants" id="AT1G52220.3">
    <molecule id="Q9M812-3"/>
    <property type="protein sequence ID" value="AT1G52220.3"/>
    <property type="gene ID" value="AT1G52220"/>
</dbReference>
<dbReference type="GeneID" id="841652"/>
<dbReference type="Gramene" id="AT1G52220.1">
    <molecule id="Q9M812-1"/>
    <property type="protein sequence ID" value="AT1G52220.1"/>
    <property type="gene ID" value="AT1G52220"/>
</dbReference>
<dbReference type="Gramene" id="AT1G52220.2">
    <molecule id="Q9M812-2"/>
    <property type="protein sequence ID" value="AT1G52220.2"/>
    <property type="gene ID" value="AT1G52220"/>
</dbReference>
<dbReference type="Gramene" id="AT1G52220.3">
    <molecule id="Q9M812-3"/>
    <property type="protein sequence ID" value="AT1G52220.3"/>
    <property type="gene ID" value="AT1G52220"/>
</dbReference>
<dbReference type="KEGG" id="ath:AT1G52220"/>
<dbReference type="Araport" id="AT1G52220"/>
<dbReference type="TAIR" id="AT1G52220">
    <property type="gene designation" value="CURT1C"/>
</dbReference>
<dbReference type="eggNOG" id="ENOG502S1DZ">
    <property type="taxonomic scope" value="Eukaryota"/>
</dbReference>
<dbReference type="InParanoid" id="Q9M812"/>
<dbReference type="OMA" id="AFWASAN"/>
<dbReference type="OrthoDB" id="2014299at2759"/>
<dbReference type="PhylomeDB" id="Q9M812"/>
<dbReference type="PRO" id="PR:Q9M812"/>
<dbReference type="Proteomes" id="UP000006548">
    <property type="component" value="Chromosome 1"/>
</dbReference>
<dbReference type="ExpressionAtlas" id="Q9M812">
    <property type="expression patterns" value="baseline and differential"/>
</dbReference>
<dbReference type="GO" id="GO:0009507">
    <property type="term" value="C:chloroplast"/>
    <property type="evidence" value="ECO:0007005"/>
    <property type="project" value="TAIR"/>
</dbReference>
<dbReference type="GO" id="GO:0009535">
    <property type="term" value="C:chloroplast thylakoid membrane"/>
    <property type="evidence" value="ECO:0007005"/>
    <property type="project" value="TAIR"/>
</dbReference>
<dbReference type="GO" id="GO:0005634">
    <property type="term" value="C:nucleus"/>
    <property type="evidence" value="ECO:0007005"/>
    <property type="project" value="TAIR"/>
</dbReference>
<dbReference type="InterPro" id="IPR025564">
    <property type="entry name" value="CAAD_dom"/>
</dbReference>
<dbReference type="InterPro" id="IPR033344">
    <property type="entry name" value="CURT1"/>
</dbReference>
<dbReference type="PANTHER" id="PTHR33222">
    <property type="match status" value="1"/>
</dbReference>
<dbReference type="PANTHER" id="PTHR33222:SF3">
    <property type="entry name" value="PROTEIN CURVATURE THYLAKOID 1C, CHLOROPLASTIC"/>
    <property type="match status" value="1"/>
</dbReference>
<dbReference type="Pfam" id="PF14159">
    <property type="entry name" value="CAAD"/>
    <property type="match status" value="1"/>
</dbReference>
<comment type="function">
    <text evidence="3">Determines thylakoid architecture by inducing membrane curvature.</text>
</comment>
<comment type="subunit">
    <text evidence="2 3">Homo- and heterodimers and trimers. Interacts with PSAD2.</text>
</comment>
<comment type="subcellular location">
    <subcellularLocation>
        <location evidence="2 3">Plastid</location>
        <location evidence="2 3">Chloroplast thylakoid membrane</location>
        <topology evidence="2 3">Multi-pass membrane protein</topology>
    </subcellularLocation>
</comment>
<comment type="alternative products">
    <event type="alternative splicing"/>
    <isoform>
        <id>Q9M812-1</id>
        <name>1</name>
        <sequence type="displayed"/>
    </isoform>
    <isoform>
        <id>Q9M812-2</id>
        <name>2</name>
        <sequence type="described" ref="VSP_053422"/>
    </isoform>
    <isoform>
        <id>Q9M812-3</id>
        <name>3</name>
        <sequence type="described" ref="VSP_053423"/>
    </isoform>
</comment>
<comment type="disruption phenotype">
    <text evidence="3">No effect on growth behavior, leaf coloration, grana stacks or photochemical efficiency of photosystem II. Curt1a, curt1b, curt1c and curt1d quadruple mutant shows disorganized thylakoids with extended stretches of unstacked membranes and broader stacks made up of fewer layers.</text>
</comment>
<comment type="similarity">
    <text evidence="4">Belongs to the CURT family.</text>
</comment>
<gene>
    <name type="primary">CURT1C</name>
    <name type="ordered locus">At1g52220</name>
    <name type="ORF">F9I5.10</name>
</gene>